<sequence length="429" mass="45770">MAPIALKILLFTSLIVPSISLSDQARNGHARTICEVKPGGSSEIDDVPAIVDALTTCGSGGRVIFSNNTYHINSVMNTTWLDDVEIDLQGTLLWSTNISYWLNHSLPVGYQNQSTAWILGGKDIVFEGHGYGTFNGSGQTWYRYVGSTSNYPRRPNQLTVSGAMGAVFKGLRFVQSQMWTMSIIHTSNSWFDSIYVNNLYDDGGSAQNTDGANTIYSKNITLTNWEVVNGDDSISTKANSTDITIANCTFTSGLGIAIGSIGQYNGAFETVERLKISNITYEKTTHAVYFKTWTGDQVGYPPNGGGGGLGYASDIVATNLKTNNLKGAPFTISQCTTFSGASGNCTNSKFQIRDLVFTDISGTTDSSDVASFQCSAVAPCEDITIENVSLRIAGNTTHAEEYLCGNVDGTVGFNCTGDVCVGSSATGGC</sequence>
<protein>
    <recommendedName>
        <fullName>Alpha-L-rhamnosidase rgxB</fullName>
        <ecNumber>3.2.1.40</ecNumber>
    </recommendedName>
    <alternativeName>
        <fullName>Exopolygalacturonase B</fullName>
    </alternativeName>
    <alternativeName>
        <fullName>Exorhamnogalacturonase B</fullName>
    </alternativeName>
    <alternativeName>
        <fullName>Pnp-rhamnohydrolase</fullName>
    </alternativeName>
</protein>
<evidence type="ECO:0000250" key="1"/>
<evidence type="ECO:0000255" key="2"/>
<evidence type="ECO:0000269" key="3">
    <source>
    </source>
</evidence>
<evidence type="ECO:0000305" key="4"/>
<reference key="1">
    <citation type="journal article" date="2006" name="Biochem. J.">
        <title>A new group of exo-acting family 28 glycoside hydrolases of Aspergillus niger that are involved in pectin degradation.</title>
        <authorList>
            <person name="Martens-Uzunova E.S."/>
            <person name="Zandleven J.S."/>
            <person name="Benen J.A."/>
            <person name="Awad H."/>
            <person name="Kools H.J."/>
            <person name="Beldman G."/>
            <person name="Voragen A.G."/>
            <person name="Van den Berg J.A."/>
            <person name="Schaap P.J."/>
        </authorList>
    </citation>
    <scope>NUCLEOTIDE SEQUENCE [GENOMIC DNA]</scope>
    <scope>FUNCTION</scope>
    <scope>INDUCTION</scope>
</reference>
<reference key="2">
    <citation type="journal article" date="2007" name="Nat. Biotechnol.">
        <title>Genome sequencing and analysis of the versatile cell factory Aspergillus niger CBS 513.88.</title>
        <authorList>
            <person name="Pel H.J."/>
            <person name="de Winde J.H."/>
            <person name="Archer D.B."/>
            <person name="Dyer P.S."/>
            <person name="Hofmann G."/>
            <person name="Schaap P.J."/>
            <person name="Turner G."/>
            <person name="de Vries R.P."/>
            <person name="Albang R."/>
            <person name="Albermann K."/>
            <person name="Andersen M.R."/>
            <person name="Bendtsen J.D."/>
            <person name="Benen J.A.E."/>
            <person name="van den Berg M."/>
            <person name="Breestraat S."/>
            <person name="Caddick M.X."/>
            <person name="Contreras R."/>
            <person name="Cornell M."/>
            <person name="Coutinho P.M."/>
            <person name="Danchin E.G.J."/>
            <person name="Debets A.J.M."/>
            <person name="Dekker P."/>
            <person name="van Dijck P.W.M."/>
            <person name="van Dijk A."/>
            <person name="Dijkhuizen L."/>
            <person name="Driessen A.J.M."/>
            <person name="d'Enfert C."/>
            <person name="Geysens S."/>
            <person name="Goosen C."/>
            <person name="Groot G.S.P."/>
            <person name="de Groot P.W.J."/>
            <person name="Guillemette T."/>
            <person name="Henrissat B."/>
            <person name="Herweijer M."/>
            <person name="van den Hombergh J.P.T.W."/>
            <person name="van den Hondel C.A.M.J.J."/>
            <person name="van der Heijden R.T.J.M."/>
            <person name="van der Kaaij R.M."/>
            <person name="Klis F.M."/>
            <person name="Kools H.J."/>
            <person name="Kubicek C.P."/>
            <person name="van Kuyk P.A."/>
            <person name="Lauber J."/>
            <person name="Lu X."/>
            <person name="van der Maarel M.J.E.C."/>
            <person name="Meulenberg R."/>
            <person name="Menke H."/>
            <person name="Mortimer M.A."/>
            <person name="Nielsen J."/>
            <person name="Oliver S.G."/>
            <person name="Olsthoorn M."/>
            <person name="Pal K."/>
            <person name="van Peij N.N.M.E."/>
            <person name="Ram A.F.J."/>
            <person name="Rinas U."/>
            <person name="Roubos J.A."/>
            <person name="Sagt C.M.J."/>
            <person name="Schmoll M."/>
            <person name="Sun J."/>
            <person name="Ussery D."/>
            <person name="Varga J."/>
            <person name="Vervecken W."/>
            <person name="van de Vondervoort P.J.J."/>
            <person name="Wedler H."/>
            <person name="Woesten H.A.B."/>
            <person name="Zeng A.-P."/>
            <person name="van Ooyen A.J.J."/>
            <person name="Visser J."/>
            <person name="Stam H."/>
        </authorList>
    </citation>
    <scope>NUCLEOTIDE SEQUENCE [LARGE SCALE GENOMIC DNA]</scope>
    <source>
        <strain>ATCC MYA-4892 / CBS 513.88 / FGSC A1513</strain>
    </source>
</reference>
<gene>
    <name type="primary">rgxB</name>
    <name type="ORF">An03g02080</name>
</gene>
<proteinExistence type="evidence at transcript level"/>
<organism>
    <name type="scientific">Aspergillus niger (strain ATCC MYA-4892 / CBS 513.88 / FGSC A1513)</name>
    <dbReference type="NCBI Taxonomy" id="425011"/>
    <lineage>
        <taxon>Eukaryota</taxon>
        <taxon>Fungi</taxon>
        <taxon>Dikarya</taxon>
        <taxon>Ascomycota</taxon>
        <taxon>Pezizomycotina</taxon>
        <taxon>Eurotiomycetes</taxon>
        <taxon>Eurotiomycetidae</taxon>
        <taxon>Eurotiales</taxon>
        <taxon>Aspergillaceae</taxon>
        <taxon>Aspergillus</taxon>
        <taxon>Aspergillus subgen. Circumdati</taxon>
    </lineage>
</organism>
<accession>A2QG68</accession>
<accession>Q27UA8</accession>
<dbReference type="EC" id="3.2.1.40"/>
<dbReference type="EMBL" id="DQ374427">
    <property type="protein sequence ID" value="ABD61567.1"/>
    <property type="status" value="ALT_INIT"/>
    <property type="molecule type" value="Genomic_DNA"/>
</dbReference>
<dbReference type="EMBL" id="AM270048">
    <property type="protein sequence ID" value="CAK38178.1"/>
    <property type="status" value="ALT_INIT"/>
    <property type="molecule type" value="Genomic_DNA"/>
</dbReference>
<dbReference type="RefSeq" id="XP_001390107.2">
    <property type="nucleotide sequence ID" value="XM_001390070.2"/>
</dbReference>
<dbReference type="SMR" id="A2QG68"/>
<dbReference type="CAZy" id="GH28">
    <property type="family name" value="Glycoside Hydrolase Family 28"/>
</dbReference>
<dbReference type="GlyCosmos" id="A2QG68">
    <property type="glycosylation" value="14 sites, No reported glycans"/>
</dbReference>
<dbReference type="EnsemblFungi" id="CAK38178">
    <property type="protein sequence ID" value="CAK38178"/>
    <property type="gene ID" value="An03g02080"/>
</dbReference>
<dbReference type="GeneID" id="4980196"/>
<dbReference type="KEGG" id="ang:An03g02080"/>
<dbReference type="BioCyc" id="MetaCyc:MONOMER-18216"/>
<dbReference type="Proteomes" id="UP000006706">
    <property type="component" value="Chromosome 6R"/>
</dbReference>
<dbReference type="GO" id="GO:0005576">
    <property type="term" value="C:extracellular region"/>
    <property type="evidence" value="ECO:0007669"/>
    <property type="project" value="UniProtKB-SubCell"/>
</dbReference>
<dbReference type="GO" id="GO:0030596">
    <property type="term" value="F:alpha-L-rhamnosidase activity"/>
    <property type="evidence" value="ECO:0007669"/>
    <property type="project" value="UniProtKB-EC"/>
</dbReference>
<dbReference type="GO" id="GO:0004650">
    <property type="term" value="F:polygalacturonase activity"/>
    <property type="evidence" value="ECO:0007669"/>
    <property type="project" value="InterPro"/>
</dbReference>
<dbReference type="GO" id="GO:0071555">
    <property type="term" value="P:cell wall organization"/>
    <property type="evidence" value="ECO:0007669"/>
    <property type="project" value="UniProtKB-KW"/>
</dbReference>
<dbReference type="GO" id="GO:0000272">
    <property type="term" value="P:polysaccharide catabolic process"/>
    <property type="evidence" value="ECO:0007669"/>
    <property type="project" value="UniProtKB-KW"/>
</dbReference>
<dbReference type="Gene3D" id="2.160.20.10">
    <property type="entry name" value="Single-stranded right-handed beta-helix, Pectin lyase-like"/>
    <property type="match status" value="1"/>
</dbReference>
<dbReference type="InterPro" id="IPR000743">
    <property type="entry name" value="Glyco_hydro_28"/>
</dbReference>
<dbReference type="InterPro" id="IPR012334">
    <property type="entry name" value="Pectin_lyas_fold"/>
</dbReference>
<dbReference type="InterPro" id="IPR011050">
    <property type="entry name" value="Pectin_lyase_fold/virulence"/>
</dbReference>
<dbReference type="PANTHER" id="PTHR31736">
    <property type="match status" value="1"/>
</dbReference>
<dbReference type="PANTHER" id="PTHR31736:SF8">
    <property type="entry name" value="PUTATIVE (AFU_ORTHOLOGUE AFUA_7G06410)-RELATED"/>
    <property type="match status" value="1"/>
</dbReference>
<dbReference type="Pfam" id="PF00295">
    <property type="entry name" value="Glyco_hydro_28"/>
    <property type="match status" value="1"/>
</dbReference>
<dbReference type="SUPFAM" id="SSF51126">
    <property type="entry name" value="Pectin lyase-like"/>
    <property type="match status" value="1"/>
</dbReference>
<feature type="signal peptide" evidence="2">
    <location>
        <begin position="1"/>
        <end position="20"/>
    </location>
</feature>
<feature type="chain" id="PRO_5000219749" description="Alpha-L-rhamnosidase rgxB">
    <location>
        <begin position="21"/>
        <end position="429"/>
    </location>
</feature>
<feature type="repeat" description="PbH1 1">
    <location>
        <begin position="217"/>
        <end position="238"/>
    </location>
</feature>
<feature type="repeat" description="PbH1 2">
    <location>
        <begin position="240"/>
        <end position="260"/>
    </location>
</feature>
<feature type="repeat" description="PbH1 3">
    <location>
        <begin position="271"/>
        <end position="292"/>
    </location>
</feature>
<feature type="active site" description="Proton donor" evidence="1">
    <location>
        <position position="231"/>
    </location>
</feature>
<feature type="glycosylation site" description="N-linked (GlcNAc...) asparagine" evidence="2">
    <location>
        <position position="67"/>
    </location>
</feature>
<feature type="glycosylation site" description="N-linked (GlcNAc...) asparagine" evidence="2">
    <location>
        <position position="77"/>
    </location>
</feature>
<feature type="glycosylation site" description="N-linked (GlcNAc...) asparagine" evidence="2">
    <location>
        <position position="97"/>
    </location>
</feature>
<feature type="glycosylation site" description="N-linked (GlcNAc...) asparagine" evidence="2">
    <location>
        <position position="103"/>
    </location>
</feature>
<feature type="glycosylation site" description="N-linked (GlcNAc...) asparagine" evidence="2">
    <location>
        <position position="112"/>
    </location>
</feature>
<feature type="glycosylation site" description="N-linked (GlcNAc...) asparagine" evidence="2">
    <location>
        <position position="135"/>
    </location>
</feature>
<feature type="glycosylation site" description="N-linked (GlcNAc...) asparagine" evidence="2">
    <location>
        <position position="219"/>
    </location>
</feature>
<feature type="glycosylation site" description="N-linked (GlcNAc...) asparagine" evidence="2">
    <location>
        <position position="239"/>
    </location>
</feature>
<feature type="glycosylation site" description="N-linked (GlcNAc...) asparagine" evidence="2">
    <location>
        <position position="247"/>
    </location>
</feature>
<feature type="glycosylation site" description="N-linked (GlcNAc...) asparagine" evidence="2">
    <location>
        <position position="278"/>
    </location>
</feature>
<feature type="glycosylation site" description="N-linked (GlcNAc...) asparagine" evidence="2">
    <location>
        <position position="344"/>
    </location>
</feature>
<feature type="glycosylation site" description="N-linked (GlcNAc...) asparagine" evidence="2">
    <location>
        <position position="387"/>
    </location>
</feature>
<feature type="glycosylation site" description="N-linked (GlcNAc...) asparagine" evidence="2">
    <location>
        <position position="395"/>
    </location>
</feature>
<feature type="glycosylation site" description="N-linked (GlcNAc...) asparagine" evidence="2">
    <location>
        <position position="414"/>
    </location>
</feature>
<feature type="disulfide bond" evidence="1">
    <location>
        <begin position="374"/>
        <end position="380"/>
    </location>
</feature>
<name>RGXB_ASPNC</name>
<comment type="function">
    <text evidence="3">Alpha-L-rhamnosidase which is able to degrade p-nitrophenyl-alpha-L-rhamnopyranoside (pnp_Rha). The natural substrate of this enzyme has not been identified yet.</text>
</comment>
<comment type="catalytic activity">
    <reaction>
        <text>Hydrolysis of terminal non-reducing alpha-L-rhamnose residues in alpha-L-rhamnosides.</text>
        <dbReference type="EC" id="3.2.1.40"/>
    </reaction>
</comment>
<comment type="subcellular location">
    <subcellularLocation>
        <location evidence="1">Secreted</location>
    </subcellularLocation>
</comment>
<comment type="induction">
    <text evidence="3">By rhamnose and sugar beet pectin.</text>
</comment>
<comment type="similarity">
    <text evidence="4">Belongs to the glycosyl hydrolase 28 family.</text>
</comment>
<comment type="sequence caution" evidence="4">
    <conflict type="erroneous initiation">
        <sequence resource="EMBL-CDS" id="ABD61567"/>
    </conflict>
    <text>Extended N-terminus.</text>
</comment>
<comment type="sequence caution" evidence="4">
    <conflict type="erroneous initiation">
        <sequence resource="EMBL-CDS" id="CAK38178"/>
    </conflict>
    <text>Extended N-terminus.</text>
</comment>
<keyword id="KW-0119">Carbohydrate metabolism</keyword>
<keyword id="KW-0961">Cell wall biogenesis/degradation</keyword>
<keyword id="KW-1015">Disulfide bond</keyword>
<keyword id="KW-0325">Glycoprotein</keyword>
<keyword id="KW-0326">Glycosidase</keyword>
<keyword id="KW-0378">Hydrolase</keyword>
<keyword id="KW-0624">Polysaccharide degradation</keyword>
<keyword id="KW-1185">Reference proteome</keyword>
<keyword id="KW-0677">Repeat</keyword>
<keyword id="KW-0964">Secreted</keyword>
<keyword id="KW-0732">Signal</keyword>